<keyword id="KW-0002">3D-structure</keyword>
<keyword id="KW-0007">Acetylation</keyword>
<keyword id="KW-0025">Alternative splicing</keyword>
<keyword id="KW-0225">Disease variant</keyword>
<keyword id="KW-0887">Epilepsy</keyword>
<keyword id="KW-0325">Glycoprotein</keyword>
<keyword id="KW-0496">Mitochondrion</keyword>
<keyword id="KW-0520">NAD</keyword>
<keyword id="KW-0560">Oxidoreductase</keyword>
<keyword id="KW-0597">Phosphoprotein</keyword>
<keyword id="KW-1267">Proteomics identification</keyword>
<keyword id="KW-1185">Reference proteome</keyword>
<keyword id="KW-0809">Transit peptide</keyword>
<keyword id="KW-0816">Tricarboxylic acid cycle</keyword>
<protein>
    <recommendedName>
        <fullName>Malate dehydrogenase, mitochondrial</fullName>
        <ecNumber evidence="9">1.1.1.37</ecNumber>
    </recommendedName>
</protein>
<proteinExistence type="evidence at protein level"/>
<feature type="transit peptide" description="Mitochondrion" evidence="1">
    <location>
        <begin position="1"/>
        <end position="24"/>
    </location>
</feature>
<feature type="chain" id="PRO_0000018628" description="Malate dehydrogenase, mitochondrial">
    <location>
        <begin position="25"/>
        <end position="338"/>
    </location>
</feature>
<feature type="active site" description="Proton acceptor" evidence="1">
    <location>
        <position position="200"/>
    </location>
</feature>
<feature type="binding site" evidence="11">
    <location>
        <begin position="31"/>
        <end position="37"/>
    </location>
    <ligand>
        <name>NAD(+)</name>
        <dbReference type="ChEBI" id="CHEBI:57540"/>
    </ligand>
</feature>
<feature type="binding site" evidence="11">
    <location>
        <position position="57"/>
    </location>
    <ligand>
        <name>NAD(+)</name>
        <dbReference type="ChEBI" id="CHEBI:57540"/>
    </ligand>
</feature>
<feature type="binding site" evidence="5 11">
    <location>
        <position position="104"/>
    </location>
    <ligand>
        <name>substrate</name>
    </ligand>
</feature>
<feature type="binding site" evidence="5 11">
    <location>
        <position position="110"/>
    </location>
    <ligand>
        <name>substrate</name>
    </ligand>
</feature>
<feature type="binding site" evidence="11">
    <location>
        <position position="117"/>
    </location>
    <ligand>
        <name>NAD(+)</name>
        <dbReference type="ChEBI" id="CHEBI:57540"/>
    </ligand>
</feature>
<feature type="binding site" evidence="11">
    <location>
        <begin position="140"/>
        <end position="142"/>
    </location>
    <ligand>
        <name>NAD(+)</name>
        <dbReference type="ChEBI" id="CHEBI:57540"/>
    </ligand>
</feature>
<feature type="binding site" evidence="5 11">
    <location>
        <position position="142"/>
    </location>
    <ligand>
        <name>substrate</name>
    </ligand>
</feature>
<feature type="binding site" evidence="5 11">
    <location>
        <position position="176"/>
    </location>
    <ligand>
        <name>substrate</name>
    </ligand>
</feature>
<feature type="binding site" evidence="11">
    <location>
        <position position="251"/>
    </location>
    <ligand>
        <name>NAD(+)</name>
        <dbReference type="ChEBI" id="CHEBI:57540"/>
    </ligand>
</feature>
<feature type="modified residue" description="N6-acetyllysine; alternate" evidence="3">
    <location>
        <position position="78"/>
    </location>
</feature>
<feature type="modified residue" description="N6-succinyllysine; alternate" evidence="3">
    <location>
        <position position="78"/>
    </location>
</feature>
<feature type="modified residue" description="N6-acetyllysine; alternate" evidence="3">
    <location>
        <position position="91"/>
    </location>
</feature>
<feature type="modified residue" description="N6-succinyllysine; alternate" evidence="3">
    <location>
        <position position="91"/>
    </location>
</feature>
<feature type="modified residue" description="N6-acetyllysine" evidence="14">
    <location>
        <position position="165"/>
    </location>
</feature>
<feature type="modified residue" description="N6-acetyllysine; alternate" evidence="7 14">
    <location>
        <position position="185"/>
    </location>
</feature>
<feature type="modified residue" description="N6-succinyllysine; alternate" evidence="3">
    <location>
        <position position="185"/>
    </location>
</feature>
<feature type="modified residue" description="N6-succinyllysine" evidence="3">
    <location>
        <position position="203"/>
    </location>
</feature>
<feature type="modified residue" description="N6-acetyllysine; alternate" evidence="3">
    <location>
        <position position="215"/>
    </location>
</feature>
<feature type="modified residue" description="N6-succinyllysine; alternate" evidence="3">
    <location>
        <position position="215"/>
    </location>
</feature>
<feature type="modified residue" description="N6-acetyllysine; alternate" evidence="3">
    <location>
        <position position="239"/>
    </location>
</feature>
<feature type="modified residue" description="N6-malonyllysine; alternate" evidence="4">
    <location>
        <position position="239"/>
    </location>
</feature>
<feature type="modified residue" description="N6-succinyllysine; alternate" evidence="4">
    <location>
        <position position="239"/>
    </location>
</feature>
<feature type="modified residue" description="Phosphoserine" evidence="15">
    <location>
        <position position="246"/>
    </location>
</feature>
<feature type="modified residue" description="N6-succinyllysine" evidence="3">
    <location>
        <position position="269"/>
    </location>
</feature>
<feature type="modified residue" description="N6-acetyllysine; alternate" evidence="3">
    <location>
        <position position="296"/>
    </location>
</feature>
<feature type="modified residue" description="N6-succinyllysine; alternate" evidence="3">
    <location>
        <position position="296"/>
    </location>
</feature>
<feature type="modified residue" description="N6-acetyllysine; alternate" evidence="7 14">
    <location>
        <position position="301"/>
    </location>
</feature>
<feature type="modified residue" description="N6-succinyllysine; alternate" evidence="4">
    <location>
        <position position="301"/>
    </location>
</feature>
<feature type="modified residue" description="N6-acetyllysine; alternate" evidence="7">
    <location>
        <position position="307"/>
    </location>
</feature>
<feature type="modified residue" description="N6-malonyllysine; alternate" evidence="8">
    <location>
        <position position="307"/>
    </location>
</feature>
<feature type="modified residue" description="N6-succinyllysine; alternate" evidence="3">
    <location>
        <position position="307"/>
    </location>
</feature>
<feature type="modified residue" description="N6-acetyllysine; alternate" evidence="7 14">
    <location>
        <position position="314"/>
    </location>
</feature>
<feature type="modified residue" description="N6-succinyllysine; alternate" evidence="3">
    <location>
        <position position="314"/>
    </location>
</feature>
<feature type="modified residue" description="N6-acetyllysine; alternate" evidence="3">
    <location>
        <position position="324"/>
    </location>
</feature>
<feature type="modified residue" description="N6-succinyllysine; alternate" evidence="3">
    <location>
        <position position="324"/>
    </location>
</feature>
<feature type="modified residue" description="Phosphoserine" evidence="15">
    <location>
        <position position="326"/>
    </location>
</feature>
<feature type="modified residue" description="N6-acetyllysine; alternate" evidence="4">
    <location>
        <position position="328"/>
    </location>
</feature>
<feature type="modified residue" description="N6-succinyllysine; alternate" evidence="4">
    <location>
        <position position="328"/>
    </location>
</feature>
<feature type="modified residue" description="N6-acetyllysine; alternate" evidence="14">
    <location>
        <position position="329"/>
    </location>
</feature>
<feature type="modified residue" description="N6-malonyllysine; alternate" evidence="4">
    <location>
        <position position="329"/>
    </location>
</feature>
<feature type="modified residue" description="N6-acetyllysine; alternate" evidence="14">
    <location>
        <position position="335"/>
    </location>
</feature>
<feature type="modified residue" description="N6-succinyllysine; alternate" evidence="3">
    <location>
        <position position="335"/>
    </location>
</feature>
<feature type="glycosylation site" description="O-linked (GlcNAc) serine" evidence="2">
    <location>
        <position position="33"/>
    </location>
</feature>
<feature type="splice variant" id="VSP_055312" description="In isoform 2." evidence="12">
    <location>
        <begin position="144"/>
        <end position="185"/>
    </location>
</feature>
<feature type="sequence variant" id="VAR_047787" description="In dbSNP:rs6720." evidence="6 10">
    <original>A</original>
    <variation>V</variation>
    <location>
        <position position="9"/>
    </location>
</feature>
<feature type="sequence variant" id="VAR_078001" description="In DEE51; severe defects in aerobic respiration, when assayed in a heterologous system; dbSNP:rs782308462." evidence="9">
    <original>G</original>
    <variation>R</variation>
    <location>
        <position position="37"/>
    </location>
</feature>
<feature type="sequence variant" id="VAR_078002" description="In DEE51; decreased protein abundance; strong decrease in malate dehydrogenase activity; severe defects in aerobic respiration, when assayed in a heterologous system; dbSNP:rs375002796." evidence="9">
    <original>P</original>
    <variation>L</variation>
    <location>
        <position position="133"/>
    </location>
</feature>
<feature type="sequence variant" id="VAR_078003" description="In DEE51; decreased protein abundance; strong decrease in malate dehydrogenase activity; severe defects in aerobic respiration, when assayed in a heterologous system; dbSNP:rs1057519566." evidence="9">
    <original>P</original>
    <variation>L</variation>
    <location>
        <position position="207"/>
    </location>
</feature>
<feature type="mutagenesis site" description="No activation of enzyme activity on treatment with TSA or NAM; when associated with R-301; R-307 and R-314." evidence="7">
    <original>K</original>
    <variation>R</variation>
    <location>
        <position position="185"/>
    </location>
</feature>
<feature type="mutagenesis site" description="No activation of enzyme activity on treatment with TSA or NAM; when associated with R-185; R-307 and R-314." evidence="7">
    <original>K</original>
    <variation>R</variation>
    <location>
        <position position="301"/>
    </location>
</feature>
<feature type="mutagenesis site" description="No activation of enzyme activity on treatment with TSA or NAM; when associated with R-185; R-301 and R-314." evidence="7">
    <original>K</original>
    <variation>R</variation>
    <location>
        <position position="307"/>
    </location>
</feature>
<feature type="mutagenesis site" description="No activation of enzyme activity on treatment with TSA or NAM; when associated with R-185; R-301 and R-307." evidence="7">
    <original>K</original>
    <variation>R</variation>
    <location>
        <position position="314"/>
    </location>
</feature>
<feature type="sequence conflict" description="In Ref. 2; BAG56955." evidence="13" ref="2">
    <original>K</original>
    <variation>R</variation>
    <location>
        <position position="301"/>
    </location>
</feature>
<feature type="strand" evidence="16">
    <location>
        <begin position="25"/>
        <end position="30"/>
    </location>
</feature>
<feature type="turn" evidence="16">
    <location>
        <begin position="31"/>
        <end position="33"/>
    </location>
</feature>
<feature type="helix" evidence="16">
    <location>
        <begin position="37"/>
        <end position="45"/>
    </location>
</feature>
<feature type="strand" evidence="16">
    <location>
        <begin position="50"/>
        <end position="60"/>
    </location>
</feature>
<feature type="helix" evidence="16">
    <location>
        <begin position="61"/>
        <end position="69"/>
    </location>
</feature>
<feature type="strand" evidence="16">
    <location>
        <begin position="71"/>
        <end position="74"/>
    </location>
</feature>
<feature type="strand" evidence="16">
    <location>
        <begin position="76"/>
        <end position="82"/>
    </location>
</feature>
<feature type="turn" evidence="16">
    <location>
        <begin position="83"/>
        <end position="85"/>
    </location>
</feature>
<feature type="helix" evidence="16">
    <location>
        <begin position="86"/>
        <end position="90"/>
    </location>
</feature>
<feature type="strand" evidence="16">
    <location>
        <begin position="94"/>
        <end position="98"/>
    </location>
</feature>
<feature type="helix" evidence="16">
    <location>
        <begin position="110"/>
        <end position="113"/>
    </location>
</feature>
<feature type="helix" evidence="16">
    <location>
        <begin position="114"/>
        <end position="131"/>
    </location>
</feature>
<feature type="strand" evidence="16">
    <location>
        <begin position="135"/>
        <end position="139"/>
    </location>
</feature>
<feature type="helix" evidence="16">
    <location>
        <begin position="144"/>
        <end position="157"/>
    </location>
</feature>
<feature type="strand" evidence="16">
    <location>
        <begin position="165"/>
        <end position="168"/>
    </location>
</feature>
<feature type="helix" evidence="16">
    <location>
        <begin position="171"/>
        <end position="185"/>
    </location>
</feature>
<feature type="helix" evidence="16">
    <location>
        <begin position="189"/>
        <end position="191"/>
    </location>
</feature>
<feature type="strand" evidence="16">
    <location>
        <begin position="196"/>
        <end position="198"/>
    </location>
</feature>
<feature type="helix" evidence="16">
    <location>
        <begin position="202"/>
        <end position="204"/>
    </location>
</feature>
<feature type="strand" evidence="16">
    <location>
        <begin position="205"/>
        <end position="207"/>
    </location>
</feature>
<feature type="helix" evidence="16">
    <location>
        <begin position="209"/>
        <end position="211"/>
    </location>
</feature>
<feature type="helix" evidence="16">
    <location>
        <begin position="220"/>
        <end position="241"/>
    </location>
</feature>
<feature type="helix" evidence="16">
    <location>
        <begin position="249"/>
        <end position="266"/>
    </location>
</feature>
<feature type="strand" evidence="16">
    <location>
        <begin position="273"/>
        <end position="279"/>
    </location>
</feature>
<feature type="strand" evidence="16">
    <location>
        <begin position="282"/>
        <end position="295"/>
    </location>
</feature>
<feature type="strand" evidence="16">
    <location>
        <begin position="298"/>
        <end position="302"/>
    </location>
</feature>
<feature type="helix" evidence="16">
    <location>
        <begin position="310"/>
        <end position="335"/>
    </location>
</feature>
<comment type="catalytic activity">
    <reaction evidence="9">
        <text>(S)-malate + NAD(+) = oxaloacetate + NADH + H(+)</text>
        <dbReference type="Rhea" id="RHEA:21432"/>
        <dbReference type="ChEBI" id="CHEBI:15378"/>
        <dbReference type="ChEBI" id="CHEBI:15589"/>
        <dbReference type="ChEBI" id="CHEBI:16452"/>
        <dbReference type="ChEBI" id="CHEBI:57540"/>
        <dbReference type="ChEBI" id="CHEBI:57945"/>
        <dbReference type="EC" id="1.1.1.37"/>
    </reaction>
</comment>
<comment type="activity regulation">
    <text evidence="7">Enzyme activity is enhanced by acetylation.</text>
</comment>
<comment type="subunit">
    <text evidence="11">Homodimer.</text>
</comment>
<comment type="subcellular location">
    <subcellularLocation>
        <location evidence="2">Mitochondrion matrix</location>
    </subcellularLocation>
</comment>
<comment type="alternative products">
    <event type="alternative splicing"/>
    <isoform>
        <id>P40926-1</id>
        <name>1</name>
        <sequence type="displayed"/>
    </isoform>
    <isoform>
        <id>P40926-2</id>
        <name>2</name>
        <sequence type="described" ref="VSP_055312"/>
    </isoform>
</comment>
<comment type="PTM">
    <text evidence="7">Acetylation is enhanced by up to 67% after treatment either with trichostin A (TSA) or with nicotinamide (NAM) with the appearance of tri- and tetraacetylations. Glucose also increases acetylation by about 60%.</text>
</comment>
<comment type="disease" evidence="9">
    <disease id="DI-04943">
        <name>Developmental and epileptic encephalopathy 51</name>
        <acronym>DEE51</acronym>
        <description>A form of epileptic encephalopathy, a heterogeneous group of severe early-onset epilepsies characterized by refractory seizures, neurodevelopmental impairment, and poor prognosis. Development is normal prior to seizure onset, after which cognitive and motor delays become apparent. DEE51 is an autosomal recessive form characterized by onset of intractable seizures and hypotonia in the first days or weeks of life, and severely delayed psychomotor development.</description>
        <dbReference type="MIM" id="617339"/>
    </disease>
    <text>The disease is caused by variants affecting the gene represented in this entry.</text>
</comment>
<comment type="similarity">
    <text evidence="13">Belongs to the LDH/MDH superfamily. MDH type 1 family.</text>
</comment>
<comment type="online information" name="Wikipedia">
    <link uri="https://en.wikipedia.org/wiki/Malate_dehydrogenase"/>
    <text>Malate dehydrogenase entry</text>
</comment>
<name>MDHM_HUMAN</name>
<accession>P40926</accession>
<accession>A8K414</accession>
<accession>B2RE78</accession>
<accession>B4DE44</accession>
<accession>E9PDB2</accession>
<accession>O43682</accession>
<reference key="1">
    <citation type="submission" date="1998-02" db="EMBL/GenBank/DDBJ databases">
        <title>Human homolog of mouse and pig MDH mRNA.</title>
        <authorList>
            <person name="Hu G."/>
        </authorList>
    </citation>
    <scope>NUCLEOTIDE SEQUENCE [MRNA] (ISOFORM 1)</scope>
    <scope>VARIANT VAL-9</scope>
</reference>
<reference key="2">
    <citation type="journal article" date="2004" name="Nat. Genet.">
        <title>Complete sequencing and characterization of 21,243 full-length human cDNAs.</title>
        <authorList>
            <person name="Ota T."/>
            <person name="Suzuki Y."/>
            <person name="Nishikawa T."/>
            <person name="Otsuki T."/>
            <person name="Sugiyama T."/>
            <person name="Irie R."/>
            <person name="Wakamatsu A."/>
            <person name="Hayashi K."/>
            <person name="Sato H."/>
            <person name="Nagai K."/>
            <person name="Kimura K."/>
            <person name="Makita H."/>
            <person name="Sekine M."/>
            <person name="Obayashi M."/>
            <person name="Nishi T."/>
            <person name="Shibahara T."/>
            <person name="Tanaka T."/>
            <person name="Ishii S."/>
            <person name="Yamamoto J."/>
            <person name="Saito K."/>
            <person name="Kawai Y."/>
            <person name="Isono Y."/>
            <person name="Nakamura Y."/>
            <person name="Nagahari K."/>
            <person name="Murakami K."/>
            <person name="Yasuda T."/>
            <person name="Iwayanagi T."/>
            <person name="Wagatsuma M."/>
            <person name="Shiratori A."/>
            <person name="Sudo H."/>
            <person name="Hosoiri T."/>
            <person name="Kaku Y."/>
            <person name="Kodaira H."/>
            <person name="Kondo H."/>
            <person name="Sugawara M."/>
            <person name="Takahashi M."/>
            <person name="Kanda K."/>
            <person name="Yokoi T."/>
            <person name="Furuya T."/>
            <person name="Kikkawa E."/>
            <person name="Omura Y."/>
            <person name="Abe K."/>
            <person name="Kamihara K."/>
            <person name="Katsuta N."/>
            <person name="Sato K."/>
            <person name="Tanikawa M."/>
            <person name="Yamazaki M."/>
            <person name="Ninomiya K."/>
            <person name="Ishibashi T."/>
            <person name="Yamashita H."/>
            <person name="Murakawa K."/>
            <person name="Fujimori K."/>
            <person name="Tanai H."/>
            <person name="Kimata M."/>
            <person name="Watanabe M."/>
            <person name="Hiraoka S."/>
            <person name="Chiba Y."/>
            <person name="Ishida S."/>
            <person name="Ono Y."/>
            <person name="Takiguchi S."/>
            <person name="Watanabe S."/>
            <person name="Yosida M."/>
            <person name="Hotuta T."/>
            <person name="Kusano J."/>
            <person name="Kanehori K."/>
            <person name="Takahashi-Fujii A."/>
            <person name="Hara H."/>
            <person name="Tanase T.-O."/>
            <person name="Nomura Y."/>
            <person name="Togiya S."/>
            <person name="Komai F."/>
            <person name="Hara R."/>
            <person name="Takeuchi K."/>
            <person name="Arita M."/>
            <person name="Imose N."/>
            <person name="Musashino K."/>
            <person name="Yuuki H."/>
            <person name="Oshima A."/>
            <person name="Sasaki N."/>
            <person name="Aotsuka S."/>
            <person name="Yoshikawa Y."/>
            <person name="Matsunawa H."/>
            <person name="Ichihara T."/>
            <person name="Shiohata N."/>
            <person name="Sano S."/>
            <person name="Moriya S."/>
            <person name="Momiyama H."/>
            <person name="Satoh N."/>
            <person name="Takami S."/>
            <person name="Terashima Y."/>
            <person name="Suzuki O."/>
            <person name="Nakagawa S."/>
            <person name="Senoh A."/>
            <person name="Mizoguchi H."/>
            <person name="Goto Y."/>
            <person name="Shimizu F."/>
            <person name="Wakebe H."/>
            <person name="Hishigaki H."/>
            <person name="Watanabe T."/>
            <person name="Sugiyama A."/>
            <person name="Takemoto M."/>
            <person name="Kawakami B."/>
            <person name="Yamazaki M."/>
            <person name="Watanabe K."/>
            <person name="Kumagai A."/>
            <person name="Itakura S."/>
            <person name="Fukuzumi Y."/>
            <person name="Fujimori Y."/>
            <person name="Komiyama M."/>
            <person name="Tashiro H."/>
            <person name="Tanigami A."/>
            <person name="Fujiwara T."/>
            <person name="Ono T."/>
            <person name="Yamada K."/>
            <person name="Fujii Y."/>
            <person name="Ozaki K."/>
            <person name="Hirao M."/>
            <person name="Ohmori Y."/>
            <person name="Kawabata A."/>
            <person name="Hikiji T."/>
            <person name="Kobatake N."/>
            <person name="Inagaki H."/>
            <person name="Ikema Y."/>
            <person name="Okamoto S."/>
            <person name="Okitani R."/>
            <person name="Kawakami T."/>
            <person name="Noguchi S."/>
            <person name="Itoh T."/>
            <person name="Shigeta K."/>
            <person name="Senba T."/>
            <person name="Matsumura K."/>
            <person name="Nakajima Y."/>
            <person name="Mizuno T."/>
            <person name="Morinaga M."/>
            <person name="Sasaki M."/>
            <person name="Togashi T."/>
            <person name="Oyama M."/>
            <person name="Hata H."/>
            <person name="Watanabe M."/>
            <person name="Komatsu T."/>
            <person name="Mizushima-Sugano J."/>
            <person name="Satoh T."/>
            <person name="Shirai Y."/>
            <person name="Takahashi Y."/>
            <person name="Nakagawa K."/>
            <person name="Okumura K."/>
            <person name="Nagase T."/>
            <person name="Nomura N."/>
            <person name="Kikuchi H."/>
            <person name="Masuho Y."/>
            <person name="Yamashita R."/>
            <person name="Nakai K."/>
            <person name="Yada T."/>
            <person name="Nakamura Y."/>
            <person name="Ohara O."/>
            <person name="Isogai T."/>
            <person name="Sugano S."/>
        </authorList>
    </citation>
    <scope>NUCLEOTIDE SEQUENCE [LARGE SCALE MRNA] (ISOFORMS 1 AND 2)</scope>
    <source>
        <tissue>Kidney</tissue>
        <tissue>Tongue</tissue>
    </source>
</reference>
<reference key="3">
    <citation type="journal article" date="2003" name="Nature">
        <title>The DNA sequence of human chromosome 7.</title>
        <authorList>
            <person name="Hillier L.W."/>
            <person name="Fulton R.S."/>
            <person name="Fulton L.A."/>
            <person name="Graves T.A."/>
            <person name="Pepin K.H."/>
            <person name="Wagner-McPherson C."/>
            <person name="Layman D."/>
            <person name="Maas J."/>
            <person name="Jaeger S."/>
            <person name="Walker R."/>
            <person name="Wylie K."/>
            <person name="Sekhon M."/>
            <person name="Becker M.C."/>
            <person name="O'Laughlin M.D."/>
            <person name="Schaller M.E."/>
            <person name="Fewell G.A."/>
            <person name="Delehaunty K.D."/>
            <person name="Miner T.L."/>
            <person name="Nash W.E."/>
            <person name="Cordes M."/>
            <person name="Du H."/>
            <person name="Sun H."/>
            <person name="Edwards J."/>
            <person name="Bradshaw-Cordum H."/>
            <person name="Ali J."/>
            <person name="Andrews S."/>
            <person name="Isak A."/>
            <person name="Vanbrunt A."/>
            <person name="Nguyen C."/>
            <person name="Du F."/>
            <person name="Lamar B."/>
            <person name="Courtney L."/>
            <person name="Kalicki J."/>
            <person name="Ozersky P."/>
            <person name="Bielicki L."/>
            <person name="Scott K."/>
            <person name="Holmes A."/>
            <person name="Harkins R."/>
            <person name="Harris A."/>
            <person name="Strong C.M."/>
            <person name="Hou S."/>
            <person name="Tomlinson C."/>
            <person name="Dauphin-Kohlberg S."/>
            <person name="Kozlowicz-Reilly A."/>
            <person name="Leonard S."/>
            <person name="Rohlfing T."/>
            <person name="Rock S.M."/>
            <person name="Tin-Wollam A.-M."/>
            <person name="Abbott A."/>
            <person name="Minx P."/>
            <person name="Maupin R."/>
            <person name="Strowmatt C."/>
            <person name="Latreille P."/>
            <person name="Miller N."/>
            <person name="Johnson D."/>
            <person name="Murray J."/>
            <person name="Woessner J.P."/>
            <person name="Wendl M.C."/>
            <person name="Yang S.-P."/>
            <person name="Schultz B.R."/>
            <person name="Wallis J.W."/>
            <person name="Spieth J."/>
            <person name="Bieri T.A."/>
            <person name="Nelson J.O."/>
            <person name="Berkowicz N."/>
            <person name="Wohldmann P.E."/>
            <person name="Cook L.L."/>
            <person name="Hickenbotham M.T."/>
            <person name="Eldred J."/>
            <person name="Williams D."/>
            <person name="Bedell J.A."/>
            <person name="Mardis E.R."/>
            <person name="Clifton S.W."/>
            <person name="Chissoe S.L."/>
            <person name="Marra M.A."/>
            <person name="Raymond C."/>
            <person name="Haugen E."/>
            <person name="Gillett W."/>
            <person name="Zhou Y."/>
            <person name="James R."/>
            <person name="Phelps K."/>
            <person name="Iadanoto S."/>
            <person name="Bubb K."/>
            <person name="Simms E."/>
            <person name="Levy R."/>
            <person name="Clendenning J."/>
            <person name="Kaul R."/>
            <person name="Kent W.J."/>
            <person name="Furey T.S."/>
            <person name="Baertsch R.A."/>
            <person name="Brent M.R."/>
            <person name="Keibler E."/>
            <person name="Flicek P."/>
            <person name="Bork P."/>
            <person name="Suyama M."/>
            <person name="Bailey J.A."/>
            <person name="Portnoy M.E."/>
            <person name="Torrents D."/>
            <person name="Chinwalla A.T."/>
            <person name="Gish W.R."/>
            <person name="Eddy S.R."/>
            <person name="McPherson J.D."/>
            <person name="Olson M.V."/>
            <person name="Eichler E.E."/>
            <person name="Green E.D."/>
            <person name="Waterston R.H."/>
            <person name="Wilson R.K."/>
        </authorList>
    </citation>
    <scope>NUCLEOTIDE SEQUENCE [LARGE SCALE GENOMIC DNA]</scope>
</reference>
<reference key="4">
    <citation type="submission" date="2005-07" db="EMBL/GenBank/DDBJ databases">
        <authorList>
            <person name="Mural R.J."/>
            <person name="Istrail S."/>
            <person name="Sutton G.G."/>
            <person name="Florea L."/>
            <person name="Halpern A.L."/>
            <person name="Mobarry C.M."/>
            <person name="Lippert R."/>
            <person name="Walenz B."/>
            <person name="Shatkay H."/>
            <person name="Dew I."/>
            <person name="Miller J.R."/>
            <person name="Flanigan M.J."/>
            <person name="Edwards N.J."/>
            <person name="Bolanos R."/>
            <person name="Fasulo D."/>
            <person name="Halldorsson B.V."/>
            <person name="Hannenhalli S."/>
            <person name="Turner R."/>
            <person name="Yooseph S."/>
            <person name="Lu F."/>
            <person name="Nusskern D.R."/>
            <person name="Shue B.C."/>
            <person name="Zheng X.H."/>
            <person name="Zhong F."/>
            <person name="Delcher A.L."/>
            <person name="Huson D.H."/>
            <person name="Kravitz S.A."/>
            <person name="Mouchard L."/>
            <person name="Reinert K."/>
            <person name="Remington K.A."/>
            <person name="Clark A.G."/>
            <person name="Waterman M.S."/>
            <person name="Eichler E.E."/>
            <person name="Adams M.D."/>
            <person name="Hunkapiller M.W."/>
            <person name="Myers E.W."/>
            <person name="Venter J.C."/>
        </authorList>
    </citation>
    <scope>NUCLEOTIDE SEQUENCE [LARGE SCALE GENOMIC DNA]</scope>
</reference>
<reference key="5">
    <citation type="journal article" date="2004" name="Genome Res.">
        <title>The status, quality, and expansion of the NIH full-length cDNA project: the Mammalian Gene Collection (MGC).</title>
        <authorList>
            <consortium name="The MGC Project Team"/>
        </authorList>
    </citation>
    <scope>NUCLEOTIDE SEQUENCE [LARGE SCALE MRNA] (ISOFORM 1)</scope>
    <scope>VARIANT VAL-9</scope>
    <source>
        <tissue>Lung</tissue>
    </source>
</reference>
<reference key="6">
    <citation type="journal article" date="2005" name="Nat. Biotechnol.">
        <title>Immunoaffinity profiling of tyrosine phosphorylation in cancer cells.</title>
        <authorList>
            <person name="Rush J."/>
            <person name="Moritz A."/>
            <person name="Lee K.A."/>
            <person name="Guo A."/>
            <person name="Goss V.L."/>
            <person name="Spek E.J."/>
            <person name="Zhang H."/>
            <person name="Zha X.-M."/>
            <person name="Polakiewicz R.D."/>
            <person name="Comb M.J."/>
        </authorList>
    </citation>
    <scope>IDENTIFICATION BY MASS SPECTROMETRY [LARGE SCALE ANALYSIS]</scope>
</reference>
<reference key="7">
    <citation type="journal article" date="2009" name="Sci. Signal.">
        <title>Quantitative phosphoproteomic analysis of T cell receptor signaling reveals system-wide modulation of protein-protein interactions.</title>
        <authorList>
            <person name="Mayya V."/>
            <person name="Lundgren D.H."/>
            <person name="Hwang S.-I."/>
            <person name="Rezaul K."/>
            <person name="Wu L."/>
            <person name="Eng J.K."/>
            <person name="Rodionov V."/>
            <person name="Han D.K."/>
        </authorList>
    </citation>
    <scope>IDENTIFICATION BY MASS SPECTROMETRY [LARGE SCALE ANALYSIS]</scope>
    <source>
        <tissue>Leukemic T-cell</tissue>
    </source>
</reference>
<reference key="8">
    <citation type="journal article" date="2009" name="Science">
        <title>Lysine acetylation targets protein complexes and co-regulates major cellular functions.</title>
        <authorList>
            <person name="Choudhary C."/>
            <person name="Kumar C."/>
            <person name="Gnad F."/>
            <person name="Nielsen M.L."/>
            <person name="Rehman M."/>
            <person name="Walther T.C."/>
            <person name="Olsen J.V."/>
            <person name="Mann M."/>
        </authorList>
    </citation>
    <scope>ACETYLATION [LARGE SCALE ANALYSIS] AT LYS-165; LYS-185; LYS-301; LYS-314; LYS-329 AND LYS-335</scope>
    <scope>IDENTIFICATION BY MASS SPECTROMETRY [LARGE SCALE ANALYSIS]</scope>
</reference>
<reference key="9">
    <citation type="journal article" date="2010" name="Science">
        <title>Regulation of cellular metabolism by protein lysine acetylation.</title>
        <authorList>
            <person name="Zhao S."/>
            <person name="Xu W."/>
            <person name="Jiang W."/>
            <person name="Yu W."/>
            <person name="Lin Y."/>
            <person name="Zhang T."/>
            <person name="Yao J."/>
            <person name="Zhou L."/>
            <person name="Zeng Y."/>
            <person name="Li H."/>
            <person name="Li Y."/>
            <person name="Shi J."/>
            <person name="An W."/>
            <person name="Hancock S.M."/>
            <person name="He F."/>
            <person name="Qin L."/>
            <person name="Chin J."/>
            <person name="Yang P."/>
            <person name="Chen X."/>
            <person name="Lei Q."/>
            <person name="Xiong Y."/>
            <person name="Guan K.L."/>
        </authorList>
    </citation>
    <scope>ACETYLATION AT LYS-185; LYS-301; LYS-307 AND LYS-314</scope>
    <scope>ACTIVITY REGULATION</scope>
    <scope>IDENTIFICATION BY MASS SPECTROMETRY</scope>
    <scope>MUTAGENESIS OF LYS-185; LYS-301; LYS-307 AND LYS-314</scope>
</reference>
<reference key="10">
    <citation type="journal article" date="2011" name="BMC Syst. Biol.">
        <title>Initial characterization of the human central proteome.</title>
        <authorList>
            <person name="Burkard T.R."/>
            <person name="Planyavsky M."/>
            <person name="Kaupe I."/>
            <person name="Breitwieser F.P."/>
            <person name="Buerckstuemmer T."/>
            <person name="Bennett K.L."/>
            <person name="Superti-Furga G."/>
            <person name="Colinge J."/>
        </authorList>
    </citation>
    <scope>IDENTIFICATION BY MASS SPECTROMETRY [LARGE SCALE ANALYSIS]</scope>
</reference>
<reference key="11">
    <citation type="journal article" date="2011" name="Mol. Cell. Proteomics">
        <title>The first identification of lysine malonylation substrates and its regulatory enzyme.</title>
        <authorList>
            <person name="Peng C."/>
            <person name="Lu Z."/>
            <person name="Xie Z."/>
            <person name="Cheng Z."/>
            <person name="Chen Y."/>
            <person name="Tan M."/>
            <person name="Luo H."/>
            <person name="Zhang Y."/>
            <person name="He W."/>
            <person name="Yang K."/>
            <person name="Zwaans B.M."/>
            <person name="Tishkoff D."/>
            <person name="Ho L."/>
            <person name="Lombard D."/>
            <person name="He T.C."/>
            <person name="Dai J."/>
            <person name="Verdin E."/>
            <person name="Ye Y."/>
            <person name="Zhao Y."/>
        </authorList>
    </citation>
    <scope>MALONYLATION AT LYS-307</scope>
</reference>
<reference key="12">
    <citation type="journal article" date="2013" name="J. Proteome Res.">
        <title>Toward a comprehensive characterization of a human cancer cell phosphoproteome.</title>
        <authorList>
            <person name="Zhou H."/>
            <person name="Di Palma S."/>
            <person name="Preisinger C."/>
            <person name="Peng M."/>
            <person name="Polat A.N."/>
            <person name="Heck A.J."/>
            <person name="Mohammed S."/>
        </authorList>
    </citation>
    <scope>PHOSPHORYLATION [LARGE SCALE ANALYSIS] AT SER-246 AND SER-326</scope>
    <scope>IDENTIFICATION BY MASS SPECTROMETRY [LARGE SCALE ANALYSIS]</scope>
    <source>
        <tissue>Erythroleukemia</tissue>
    </source>
</reference>
<reference key="13">
    <citation type="journal article" date="2014" name="J. Proteomics">
        <title>An enzyme assisted RP-RPLC approach for in-depth analysis of human liver phosphoproteome.</title>
        <authorList>
            <person name="Bian Y."/>
            <person name="Song C."/>
            <person name="Cheng K."/>
            <person name="Dong M."/>
            <person name="Wang F."/>
            <person name="Huang J."/>
            <person name="Sun D."/>
            <person name="Wang L."/>
            <person name="Ye M."/>
            <person name="Zou H."/>
        </authorList>
    </citation>
    <scope>IDENTIFICATION BY MASS SPECTROMETRY [LARGE SCALE ANALYSIS]</scope>
    <source>
        <tissue>Liver</tissue>
    </source>
</reference>
<reference key="14">
    <citation type="journal article" date="2015" name="Proteomics">
        <title>N-terminome analysis of the human mitochondrial proteome.</title>
        <authorList>
            <person name="Vaca Jacome A.S."/>
            <person name="Rabilloud T."/>
            <person name="Schaeffer-Reiss C."/>
            <person name="Rompais M."/>
            <person name="Ayoub D."/>
            <person name="Lane L."/>
            <person name="Bairoch A."/>
            <person name="Van Dorsselaer A."/>
            <person name="Carapito C."/>
        </authorList>
    </citation>
    <scope>IDENTIFICATION BY MASS SPECTROMETRY [LARGE SCALE ANALYSIS]</scope>
</reference>
<reference key="15">
    <citation type="journal article" date="2017" name="Am. J. Hum. Genet.">
        <title>Mutations in MDH2, encoding a Krebs cycle enzyme, cause early-onset severe encephalopathy.</title>
        <authorList>
            <person name="Ait-El-Mkadem S."/>
            <person name="Dayem-Quere M."/>
            <person name="Gusic M."/>
            <person name="Chaussenot A."/>
            <person name="Bannwarth S."/>
            <person name="Francois B."/>
            <person name="Genin E.C."/>
            <person name="Fragaki K."/>
            <person name="Volker-Touw C.L."/>
            <person name="Vasnier C."/>
            <person name="Serre V."/>
            <person name="van Gassen K.L."/>
            <person name="Lespinasse F."/>
            <person name="Richter S."/>
            <person name="Eisenhofer G."/>
            <person name="Rouzier C."/>
            <person name="Mochel F."/>
            <person name="De Saint-Martin A."/>
            <person name="Abi Warde M.T."/>
            <person name="de Sain-van der Velde M.G."/>
            <person name="Jans J.J."/>
            <person name="Amiel J."/>
            <person name="Avsec Z."/>
            <person name="Mertes C."/>
            <person name="Haack T.B."/>
            <person name="Strom T."/>
            <person name="Meitinger T."/>
            <person name="Bonnen P.E."/>
            <person name="Taylor R.W."/>
            <person name="Gagneur J."/>
            <person name="van Hasselt P.M."/>
            <person name="Roetig A."/>
            <person name="Delahodde A."/>
            <person name="Prokisch H."/>
            <person name="Fuchs S.A."/>
            <person name="Paquis-Flucklinger V."/>
        </authorList>
    </citation>
    <scope>INVOLVEMENT IN DEE51</scope>
    <scope>VARIANTS DEE51 ARG-37; LEU-133 AND LEU-207</scope>
    <scope>CHARACTERIZATION OF VARIANTS DEE51 LEU-133 AND LEU-207</scope>
    <scope>CATALYTIC ACTIVITY</scope>
</reference>
<reference key="16">
    <citation type="submission" date="2006-03" db="PDB data bank">
        <title>Crystal structure of human malate dehydrogenase type 2.</title>
        <authorList>
            <consortium name="Structural genomics consortium (SGC)"/>
        </authorList>
    </citation>
    <scope>X-RAY CRYSTALLOGRAPHY (1.90 ANGSTROMS) OF 20-338 IN COMPLEX WITH NAD AND SUBSTRATE</scope>
    <scope>SUBUNIT</scope>
</reference>
<dbReference type="EC" id="1.1.1.37" evidence="9"/>
<dbReference type="EMBL" id="AF047470">
    <property type="protein sequence ID" value="AAC03787.1"/>
    <property type="molecule type" value="mRNA"/>
</dbReference>
<dbReference type="EMBL" id="AK290779">
    <property type="protein sequence ID" value="BAF83468.1"/>
    <property type="molecule type" value="mRNA"/>
</dbReference>
<dbReference type="EMBL" id="AK293460">
    <property type="protein sequence ID" value="BAG56955.1"/>
    <property type="molecule type" value="mRNA"/>
</dbReference>
<dbReference type="EMBL" id="AK316587">
    <property type="protein sequence ID" value="BAG38175.1"/>
    <property type="molecule type" value="mRNA"/>
</dbReference>
<dbReference type="EMBL" id="AC005077">
    <property type="status" value="NOT_ANNOTATED_CDS"/>
    <property type="molecule type" value="Genomic_DNA"/>
</dbReference>
<dbReference type="EMBL" id="AC006330">
    <property type="status" value="NOT_ANNOTATED_CDS"/>
    <property type="molecule type" value="Genomic_DNA"/>
</dbReference>
<dbReference type="EMBL" id="CH471220">
    <property type="protein sequence ID" value="EAW71796.1"/>
    <property type="molecule type" value="Genomic_DNA"/>
</dbReference>
<dbReference type="EMBL" id="BC001917">
    <property type="protein sequence ID" value="AAH01917.1"/>
    <property type="molecule type" value="mRNA"/>
</dbReference>
<dbReference type="CCDS" id="CCDS5581.1">
    <molecule id="P40926-1"/>
</dbReference>
<dbReference type="CCDS" id="CCDS64691.1">
    <molecule id="P40926-2"/>
</dbReference>
<dbReference type="RefSeq" id="NP_001269332.1">
    <molecule id="P40926-2"/>
    <property type="nucleotide sequence ID" value="NM_001282403.2"/>
</dbReference>
<dbReference type="RefSeq" id="NP_001269333.1">
    <property type="nucleotide sequence ID" value="NM_001282404.1"/>
</dbReference>
<dbReference type="RefSeq" id="NP_005909.2">
    <molecule id="P40926-1"/>
    <property type="nucleotide sequence ID" value="NM_005918.3"/>
</dbReference>
<dbReference type="PDB" id="2DFD">
    <property type="method" value="X-ray"/>
    <property type="resolution" value="1.90 A"/>
    <property type="chains" value="A/B/C/D=20-338"/>
</dbReference>
<dbReference type="PDB" id="4WLE">
    <property type="method" value="X-ray"/>
    <property type="resolution" value="1.90 A"/>
    <property type="chains" value="A/B/C/D=20-338"/>
</dbReference>
<dbReference type="PDB" id="4WLF">
    <property type="method" value="X-ray"/>
    <property type="resolution" value="2.20 A"/>
    <property type="chains" value="A/B/C/D=20-338"/>
</dbReference>
<dbReference type="PDB" id="4WLN">
    <property type="method" value="X-ray"/>
    <property type="resolution" value="2.28 A"/>
    <property type="chains" value="A/B/C/D=20-338"/>
</dbReference>
<dbReference type="PDB" id="4WLO">
    <property type="method" value="X-ray"/>
    <property type="resolution" value="2.50 A"/>
    <property type="chains" value="A/B/C/D=20-338"/>
</dbReference>
<dbReference type="PDB" id="4WLU">
    <property type="method" value="X-ray"/>
    <property type="resolution" value="2.14 A"/>
    <property type="chains" value="A/B/C/D=20-338"/>
</dbReference>
<dbReference type="PDB" id="4WLV">
    <property type="method" value="X-ray"/>
    <property type="resolution" value="2.40 A"/>
    <property type="chains" value="A/B/C/D=20-338"/>
</dbReference>
<dbReference type="PDBsum" id="2DFD"/>
<dbReference type="PDBsum" id="4WLE"/>
<dbReference type="PDBsum" id="4WLF"/>
<dbReference type="PDBsum" id="4WLN"/>
<dbReference type="PDBsum" id="4WLO"/>
<dbReference type="PDBsum" id="4WLU"/>
<dbReference type="PDBsum" id="4WLV"/>
<dbReference type="SMR" id="P40926"/>
<dbReference type="BioGRID" id="110356">
    <property type="interactions" value="533"/>
</dbReference>
<dbReference type="FunCoup" id="P40926">
    <property type="interactions" value="2417"/>
</dbReference>
<dbReference type="IntAct" id="P40926">
    <property type="interactions" value="71"/>
</dbReference>
<dbReference type="MINT" id="P40926"/>
<dbReference type="STRING" id="9606.ENSP00000327070"/>
<dbReference type="BindingDB" id="P40926"/>
<dbReference type="ChEMBL" id="CHEMBL5917"/>
<dbReference type="DrugBank" id="DB04272">
    <property type="generic name" value="Citric acid"/>
</dbReference>
<dbReference type="DrugBank" id="DB00157">
    <property type="generic name" value="NADH"/>
</dbReference>
<dbReference type="DrugBank" id="DB09092">
    <property type="generic name" value="Xanthinol"/>
</dbReference>
<dbReference type="DrugCentral" id="P40926"/>
<dbReference type="GlyCosmos" id="P40926">
    <property type="glycosylation" value="2 sites, 2 glycans"/>
</dbReference>
<dbReference type="GlyGen" id="P40926">
    <property type="glycosylation" value="2 sites, 2 O-linked glycans (1 site)"/>
</dbReference>
<dbReference type="iPTMnet" id="P40926"/>
<dbReference type="MetOSite" id="P40926"/>
<dbReference type="PhosphoSitePlus" id="P40926"/>
<dbReference type="SwissPalm" id="P40926"/>
<dbReference type="BioMuta" id="MDH2"/>
<dbReference type="DMDM" id="215274114"/>
<dbReference type="REPRODUCTION-2DPAGE" id="IPI00291006"/>
<dbReference type="REPRODUCTION-2DPAGE" id="P40926"/>
<dbReference type="CPTAC" id="CPTAC-2753"/>
<dbReference type="CPTAC" id="CPTAC-2754"/>
<dbReference type="CPTAC" id="CPTAC-2755"/>
<dbReference type="CPTAC" id="CPTAC-542"/>
<dbReference type="CPTAC" id="CPTAC-543"/>
<dbReference type="jPOST" id="P40926"/>
<dbReference type="MassIVE" id="P40926"/>
<dbReference type="PaxDb" id="9606-ENSP00000327070"/>
<dbReference type="PeptideAtlas" id="P40926"/>
<dbReference type="PRIDE" id="P40926"/>
<dbReference type="ProteomicsDB" id="19624"/>
<dbReference type="ProteomicsDB" id="55386">
    <molecule id="P40926-1"/>
</dbReference>
<dbReference type="Pumba" id="P40926"/>
<dbReference type="TopDownProteomics" id="P40926-1">
    <molecule id="P40926-1"/>
</dbReference>
<dbReference type="Antibodypedia" id="14905">
    <property type="antibodies" value="382 antibodies from 35 providers"/>
</dbReference>
<dbReference type="DNASU" id="4191"/>
<dbReference type="Ensembl" id="ENST00000315758.10">
    <molecule id="P40926-1"/>
    <property type="protein sequence ID" value="ENSP00000327070.5"/>
    <property type="gene ID" value="ENSG00000146701.12"/>
</dbReference>
<dbReference type="Ensembl" id="ENST00000432020.2">
    <molecule id="P40926-2"/>
    <property type="protein sequence ID" value="ENSP00000408649.2"/>
    <property type="gene ID" value="ENSG00000146701.12"/>
</dbReference>
<dbReference type="GeneID" id="4191"/>
<dbReference type="KEGG" id="hsa:4191"/>
<dbReference type="MANE-Select" id="ENST00000315758.10">
    <property type="protein sequence ID" value="ENSP00000327070.5"/>
    <property type="RefSeq nucleotide sequence ID" value="NM_005918.4"/>
    <property type="RefSeq protein sequence ID" value="NP_005909.2"/>
</dbReference>
<dbReference type="UCSC" id="uc003ueo.5">
    <molecule id="P40926-1"/>
    <property type="organism name" value="human"/>
</dbReference>
<dbReference type="AGR" id="HGNC:6971"/>
<dbReference type="CTD" id="4191"/>
<dbReference type="DisGeNET" id="4191"/>
<dbReference type="GeneCards" id="MDH2"/>
<dbReference type="HGNC" id="HGNC:6971">
    <property type="gene designation" value="MDH2"/>
</dbReference>
<dbReference type="HPA" id="ENSG00000146701">
    <property type="expression patterns" value="Tissue enhanced (skeletal muscle, tongue)"/>
</dbReference>
<dbReference type="MalaCards" id="MDH2"/>
<dbReference type="MIM" id="154100">
    <property type="type" value="gene"/>
</dbReference>
<dbReference type="MIM" id="617339">
    <property type="type" value="phenotype"/>
</dbReference>
<dbReference type="neXtProt" id="NX_P40926"/>
<dbReference type="OpenTargets" id="ENSG00000146701"/>
<dbReference type="Orphanet" id="29072">
    <property type="disease" value="Hereditary pheochromocytoma-paraganglioma"/>
</dbReference>
<dbReference type="PharmGKB" id="PA30716"/>
<dbReference type="VEuPathDB" id="HostDB:ENSG00000146701"/>
<dbReference type="eggNOG" id="KOG1494">
    <property type="taxonomic scope" value="Eukaryota"/>
</dbReference>
<dbReference type="GeneTree" id="ENSGT00390000016686"/>
<dbReference type="HOGENOM" id="CLU_047181_0_1_1"/>
<dbReference type="InParanoid" id="P40926"/>
<dbReference type="OMA" id="ASCAEYI"/>
<dbReference type="OrthoDB" id="755699at2759"/>
<dbReference type="PAN-GO" id="P40926">
    <property type="GO annotations" value="4 GO annotations based on evolutionary models"/>
</dbReference>
<dbReference type="PhylomeDB" id="P40926"/>
<dbReference type="TreeFam" id="TF300834"/>
<dbReference type="BioCyc" id="MetaCyc:HS07366-MONOMER"/>
<dbReference type="BRENDA" id="1.1.1.37">
    <property type="organism ID" value="2681"/>
</dbReference>
<dbReference type="PathwayCommons" id="P40926"/>
<dbReference type="Reactome" id="R-HSA-71403">
    <property type="pathway name" value="Citric acid cycle (TCA cycle)"/>
</dbReference>
<dbReference type="Reactome" id="R-HSA-9837999">
    <property type="pathway name" value="Mitochondrial protein degradation"/>
</dbReference>
<dbReference type="Reactome" id="R-HSA-9856872">
    <property type="pathway name" value="Malate-aspartate shuttle"/>
</dbReference>
<dbReference type="SignaLink" id="P40926"/>
<dbReference type="SIGNOR" id="P40926"/>
<dbReference type="BioGRID-ORCS" id="4191">
    <property type="hits" value="54 hits in 1169 CRISPR screens"/>
</dbReference>
<dbReference type="CD-CODE" id="91857CE7">
    <property type="entry name" value="Nucleolus"/>
</dbReference>
<dbReference type="CD-CODE" id="FB4E32DD">
    <property type="entry name" value="Presynaptic clusters and postsynaptic densities"/>
</dbReference>
<dbReference type="ChiTaRS" id="MDH2">
    <property type="organism name" value="human"/>
</dbReference>
<dbReference type="EvolutionaryTrace" id="P40926"/>
<dbReference type="GeneWiki" id="Malate_dehydrogenase_2"/>
<dbReference type="GenomeRNAi" id="4191"/>
<dbReference type="Pharos" id="P40926">
    <property type="development level" value="Tchem"/>
</dbReference>
<dbReference type="PRO" id="PR:P40926"/>
<dbReference type="Proteomes" id="UP000005640">
    <property type="component" value="Chromosome 7"/>
</dbReference>
<dbReference type="RNAct" id="P40926">
    <property type="molecule type" value="protein"/>
</dbReference>
<dbReference type="Bgee" id="ENSG00000146701">
    <property type="expression patterns" value="Expressed in body of tongue and 208 other cell types or tissues"/>
</dbReference>
<dbReference type="ExpressionAtlas" id="P40926">
    <property type="expression patterns" value="baseline and differential"/>
</dbReference>
<dbReference type="GO" id="GO:0005737">
    <property type="term" value="C:cytoplasm"/>
    <property type="evidence" value="ECO:0000318"/>
    <property type="project" value="GO_Central"/>
</dbReference>
<dbReference type="GO" id="GO:0070062">
    <property type="term" value="C:extracellular exosome"/>
    <property type="evidence" value="ECO:0007005"/>
    <property type="project" value="UniProtKB"/>
</dbReference>
<dbReference type="GO" id="GO:0016020">
    <property type="term" value="C:membrane"/>
    <property type="evidence" value="ECO:0007669"/>
    <property type="project" value="Ensembl"/>
</dbReference>
<dbReference type="GO" id="GO:0005759">
    <property type="term" value="C:mitochondrial matrix"/>
    <property type="evidence" value="ECO:0000304"/>
    <property type="project" value="Reactome"/>
</dbReference>
<dbReference type="GO" id="GO:0005739">
    <property type="term" value="C:mitochondrion"/>
    <property type="evidence" value="ECO:0000314"/>
    <property type="project" value="HPA"/>
</dbReference>
<dbReference type="GO" id="GO:0005634">
    <property type="term" value="C:nucleus"/>
    <property type="evidence" value="ECO:0007005"/>
    <property type="project" value="UniProtKB"/>
</dbReference>
<dbReference type="GO" id="GO:0042802">
    <property type="term" value="F:identical protein binding"/>
    <property type="evidence" value="ECO:0007669"/>
    <property type="project" value="Ensembl"/>
</dbReference>
<dbReference type="GO" id="GO:0030060">
    <property type="term" value="F:L-malate dehydrogenase (NAD+) activity"/>
    <property type="evidence" value="ECO:0000314"/>
    <property type="project" value="UniProtKB"/>
</dbReference>
<dbReference type="GO" id="GO:0046554">
    <property type="term" value="F:L-malate dehydrogenase (NADP+) activity"/>
    <property type="evidence" value="ECO:0007669"/>
    <property type="project" value="Ensembl"/>
</dbReference>
<dbReference type="GO" id="GO:0003723">
    <property type="term" value="F:RNA binding"/>
    <property type="evidence" value="ECO:0007005"/>
    <property type="project" value="UniProtKB"/>
</dbReference>
<dbReference type="GO" id="GO:0009060">
    <property type="term" value="P:aerobic respiration"/>
    <property type="evidence" value="ECO:0000314"/>
    <property type="project" value="UniProtKB"/>
</dbReference>
<dbReference type="GO" id="GO:0006094">
    <property type="term" value="P:gluconeogenesis"/>
    <property type="evidence" value="ECO:0007669"/>
    <property type="project" value="Ensembl"/>
</dbReference>
<dbReference type="GO" id="GO:0006108">
    <property type="term" value="P:malate metabolic process"/>
    <property type="evidence" value="ECO:0000314"/>
    <property type="project" value="UniProtKB"/>
</dbReference>
<dbReference type="GO" id="GO:0043490">
    <property type="term" value="P:malate-aspartate shuttle"/>
    <property type="evidence" value="ECO:0000315"/>
    <property type="project" value="FlyBase"/>
</dbReference>
<dbReference type="GO" id="GO:0006099">
    <property type="term" value="P:tricarboxylic acid cycle"/>
    <property type="evidence" value="ECO:0000315"/>
    <property type="project" value="FlyBase"/>
</dbReference>
<dbReference type="CDD" id="cd01337">
    <property type="entry name" value="MDH_glyoxysomal_mitochondrial"/>
    <property type="match status" value="1"/>
</dbReference>
<dbReference type="FunFam" id="3.40.50.720:FF:000013">
    <property type="entry name" value="Malate dehydrogenase"/>
    <property type="match status" value="1"/>
</dbReference>
<dbReference type="FunFam" id="3.90.110.10:FF:000001">
    <property type="entry name" value="Malate dehydrogenase"/>
    <property type="match status" value="1"/>
</dbReference>
<dbReference type="Gene3D" id="3.90.110.10">
    <property type="entry name" value="Lactate dehydrogenase/glycoside hydrolase, family 4, C-terminal"/>
    <property type="match status" value="1"/>
</dbReference>
<dbReference type="Gene3D" id="3.40.50.720">
    <property type="entry name" value="NAD(P)-binding Rossmann-like Domain"/>
    <property type="match status" value="1"/>
</dbReference>
<dbReference type="InterPro" id="IPR001557">
    <property type="entry name" value="L-lactate/malate_DH"/>
</dbReference>
<dbReference type="InterPro" id="IPR022383">
    <property type="entry name" value="Lactate/malate_DH_C"/>
</dbReference>
<dbReference type="InterPro" id="IPR001236">
    <property type="entry name" value="Lactate/malate_DH_N"/>
</dbReference>
<dbReference type="InterPro" id="IPR015955">
    <property type="entry name" value="Lactate_DH/Glyco_Ohase_4_C"/>
</dbReference>
<dbReference type="InterPro" id="IPR001252">
    <property type="entry name" value="Malate_DH_AS"/>
</dbReference>
<dbReference type="InterPro" id="IPR010097">
    <property type="entry name" value="Malate_DH_type1"/>
</dbReference>
<dbReference type="InterPro" id="IPR036291">
    <property type="entry name" value="NAD(P)-bd_dom_sf"/>
</dbReference>
<dbReference type="NCBIfam" id="TIGR01772">
    <property type="entry name" value="MDH_euk_gproteo"/>
    <property type="match status" value="1"/>
</dbReference>
<dbReference type="PANTHER" id="PTHR11540">
    <property type="entry name" value="MALATE AND LACTATE DEHYDROGENASE"/>
    <property type="match status" value="1"/>
</dbReference>
<dbReference type="PANTHER" id="PTHR11540:SF16">
    <property type="entry name" value="MALATE DEHYDROGENASE, MITOCHONDRIAL"/>
    <property type="match status" value="1"/>
</dbReference>
<dbReference type="Pfam" id="PF02866">
    <property type="entry name" value="Ldh_1_C"/>
    <property type="match status" value="1"/>
</dbReference>
<dbReference type="Pfam" id="PF00056">
    <property type="entry name" value="Ldh_1_N"/>
    <property type="match status" value="1"/>
</dbReference>
<dbReference type="PIRSF" id="PIRSF000102">
    <property type="entry name" value="Lac_mal_DH"/>
    <property type="match status" value="1"/>
</dbReference>
<dbReference type="SUPFAM" id="SSF56327">
    <property type="entry name" value="LDH C-terminal domain-like"/>
    <property type="match status" value="1"/>
</dbReference>
<dbReference type="SUPFAM" id="SSF51735">
    <property type="entry name" value="NAD(P)-binding Rossmann-fold domains"/>
    <property type="match status" value="1"/>
</dbReference>
<dbReference type="PROSITE" id="PS00068">
    <property type="entry name" value="MDH"/>
    <property type="match status" value="1"/>
</dbReference>
<gene>
    <name type="primary">MDH2</name>
</gene>
<organism>
    <name type="scientific">Homo sapiens</name>
    <name type="common">Human</name>
    <dbReference type="NCBI Taxonomy" id="9606"/>
    <lineage>
        <taxon>Eukaryota</taxon>
        <taxon>Metazoa</taxon>
        <taxon>Chordata</taxon>
        <taxon>Craniata</taxon>
        <taxon>Vertebrata</taxon>
        <taxon>Euteleostomi</taxon>
        <taxon>Mammalia</taxon>
        <taxon>Eutheria</taxon>
        <taxon>Euarchontoglires</taxon>
        <taxon>Primates</taxon>
        <taxon>Haplorrhini</taxon>
        <taxon>Catarrhini</taxon>
        <taxon>Hominidae</taxon>
        <taxon>Homo</taxon>
    </lineage>
</organism>
<evidence type="ECO:0000250" key="1">
    <source>
        <dbReference type="UniProtKB" id="P00346"/>
    </source>
</evidence>
<evidence type="ECO:0000250" key="2">
    <source>
        <dbReference type="UniProtKB" id="P04636"/>
    </source>
</evidence>
<evidence type="ECO:0000250" key="3">
    <source>
        <dbReference type="UniProtKB" id="P08249"/>
    </source>
</evidence>
<evidence type="ECO:0000250" key="4">
    <source>
        <dbReference type="UniProtKB" id="Q32LG3"/>
    </source>
</evidence>
<evidence type="ECO:0000255" key="5">
    <source>
        <dbReference type="PROSITE-ProRule" id="PRU10004"/>
    </source>
</evidence>
<evidence type="ECO:0000269" key="6">
    <source>
    </source>
</evidence>
<evidence type="ECO:0000269" key="7">
    <source>
    </source>
</evidence>
<evidence type="ECO:0000269" key="8">
    <source>
    </source>
</evidence>
<evidence type="ECO:0000269" key="9">
    <source>
    </source>
</evidence>
<evidence type="ECO:0000269" key="10">
    <source ref="1"/>
</evidence>
<evidence type="ECO:0000269" key="11">
    <source ref="16"/>
</evidence>
<evidence type="ECO:0000303" key="12">
    <source>
    </source>
</evidence>
<evidence type="ECO:0000305" key="13"/>
<evidence type="ECO:0007744" key="14">
    <source>
    </source>
</evidence>
<evidence type="ECO:0007744" key="15">
    <source>
    </source>
</evidence>
<evidence type="ECO:0007829" key="16">
    <source>
        <dbReference type="PDB" id="2DFD"/>
    </source>
</evidence>
<sequence>MLSALARPASAALRRSFSTSAQNNAKVAVLGASGGIGQPLSLLLKNSPLVSRLTLYDIAHTPGVAADLSHIETKAAVKGYLGPEQLPDCLKGCDVVVIPAGVPRKPGMTRDDLFNTNATIVATLTAACAQHCPEAMICVIANPVNSTIPITAEVFKKHGVYNPNKIFGVTTLDIVRANTFVAELKGLDPARVNVPVIGGHAGKTIIPLISQCTPKVDFPQDQLTALTGRIQEAGTEVVKAKAGAGSATLSMAYAGARFVFSLVDAMNGKEGVVECSFVKSQETECTYFSTPLLLGKKGIEKNLGIGKVSSFEEKMISDAIPELKASIKKGEDFVKTLK</sequence>